<organism>
    <name type="scientific">Synechococcus sp. (strain JA-2-3B'a(2-13))</name>
    <name type="common">Cyanobacteria bacterium Yellowstone B-Prime</name>
    <dbReference type="NCBI Taxonomy" id="321332"/>
    <lineage>
        <taxon>Bacteria</taxon>
        <taxon>Bacillati</taxon>
        <taxon>Cyanobacteriota</taxon>
        <taxon>Cyanophyceae</taxon>
        <taxon>Synechococcales</taxon>
        <taxon>Synechococcaceae</taxon>
        <taxon>Synechococcus</taxon>
    </lineage>
</organism>
<feature type="chain" id="PRO_0000371936" description="NAD(P)H-quinone oxidoreductase subunit H">
    <location>
        <begin position="1"/>
        <end position="392"/>
    </location>
</feature>
<evidence type="ECO:0000255" key="1">
    <source>
        <dbReference type="HAMAP-Rule" id="MF_01358"/>
    </source>
</evidence>
<proteinExistence type="inferred from homology"/>
<name>NDHH_SYNJB</name>
<dbReference type="EC" id="7.1.1.-" evidence="1"/>
<dbReference type="EMBL" id="CP000240">
    <property type="protein sequence ID" value="ABD01852.1"/>
    <property type="molecule type" value="Genomic_DNA"/>
</dbReference>
<dbReference type="SMR" id="Q2JN25"/>
<dbReference type="STRING" id="321332.CYB_0872"/>
<dbReference type="KEGG" id="cyb:CYB_0872"/>
<dbReference type="eggNOG" id="COG0649">
    <property type="taxonomic scope" value="Bacteria"/>
</dbReference>
<dbReference type="HOGENOM" id="CLU_015134_1_2_3"/>
<dbReference type="Proteomes" id="UP000001938">
    <property type="component" value="Chromosome"/>
</dbReference>
<dbReference type="GO" id="GO:0031676">
    <property type="term" value="C:plasma membrane-derived thylakoid membrane"/>
    <property type="evidence" value="ECO:0007669"/>
    <property type="project" value="UniProtKB-SubCell"/>
</dbReference>
<dbReference type="GO" id="GO:0051287">
    <property type="term" value="F:NAD binding"/>
    <property type="evidence" value="ECO:0007669"/>
    <property type="project" value="InterPro"/>
</dbReference>
<dbReference type="GO" id="GO:0016655">
    <property type="term" value="F:oxidoreductase activity, acting on NAD(P)H, quinone or similar compound as acceptor"/>
    <property type="evidence" value="ECO:0007669"/>
    <property type="project" value="UniProtKB-UniRule"/>
</dbReference>
<dbReference type="GO" id="GO:0048038">
    <property type="term" value="F:quinone binding"/>
    <property type="evidence" value="ECO:0007669"/>
    <property type="project" value="UniProtKB-KW"/>
</dbReference>
<dbReference type="GO" id="GO:0019684">
    <property type="term" value="P:photosynthesis, light reaction"/>
    <property type="evidence" value="ECO:0007669"/>
    <property type="project" value="UniProtKB-UniRule"/>
</dbReference>
<dbReference type="Gene3D" id="1.10.645.10">
    <property type="entry name" value="Cytochrome-c3 Hydrogenase, chain B"/>
    <property type="match status" value="1"/>
</dbReference>
<dbReference type="HAMAP" id="MF_01358">
    <property type="entry name" value="NDH1_NuoD"/>
    <property type="match status" value="1"/>
</dbReference>
<dbReference type="InterPro" id="IPR001135">
    <property type="entry name" value="NADH_Q_OxRdtase_suD"/>
</dbReference>
<dbReference type="InterPro" id="IPR014029">
    <property type="entry name" value="NADH_UbQ_OxRdtase_49kDa_CS"/>
</dbReference>
<dbReference type="InterPro" id="IPR022885">
    <property type="entry name" value="NDH1_su_D/H"/>
</dbReference>
<dbReference type="InterPro" id="IPR029014">
    <property type="entry name" value="NiFe-Hase_large"/>
</dbReference>
<dbReference type="NCBIfam" id="TIGR01962">
    <property type="entry name" value="NuoD"/>
    <property type="match status" value="1"/>
</dbReference>
<dbReference type="NCBIfam" id="NF004739">
    <property type="entry name" value="PRK06075.1"/>
    <property type="match status" value="1"/>
</dbReference>
<dbReference type="NCBIfam" id="NF005649">
    <property type="entry name" value="PRK07415.1"/>
    <property type="match status" value="1"/>
</dbReference>
<dbReference type="PANTHER" id="PTHR11993:SF10">
    <property type="entry name" value="NADH DEHYDROGENASE [UBIQUINONE] IRON-SULFUR PROTEIN 2, MITOCHONDRIAL"/>
    <property type="match status" value="1"/>
</dbReference>
<dbReference type="PANTHER" id="PTHR11993">
    <property type="entry name" value="NADH-UBIQUINONE OXIDOREDUCTASE 49 KDA SUBUNIT"/>
    <property type="match status" value="1"/>
</dbReference>
<dbReference type="Pfam" id="PF00346">
    <property type="entry name" value="Complex1_49kDa"/>
    <property type="match status" value="1"/>
</dbReference>
<dbReference type="SUPFAM" id="SSF56762">
    <property type="entry name" value="HydB/Nqo4-like"/>
    <property type="match status" value="1"/>
</dbReference>
<dbReference type="PROSITE" id="PS00535">
    <property type="entry name" value="COMPLEX1_49K"/>
    <property type="match status" value="1"/>
</dbReference>
<accession>Q2JN25</accession>
<comment type="function">
    <text evidence="1">NDH-1 shuttles electrons from an unknown electron donor, via FMN and iron-sulfur (Fe-S) centers, to quinones in the respiratory and/or the photosynthetic chain. The immediate electron acceptor for the enzyme in this species is believed to be plastoquinone. Couples the redox reaction to proton translocation, and thus conserves the redox energy in a proton gradient. Cyanobacterial NDH-1 also plays a role in inorganic carbon-concentration.</text>
</comment>
<comment type="catalytic activity">
    <reaction evidence="1">
        <text>a plastoquinone + NADH + (n+1) H(+)(in) = a plastoquinol + NAD(+) + n H(+)(out)</text>
        <dbReference type="Rhea" id="RHEA:42608"/>
        <dbReference type="Rhea" id="RHEA-COMP:9561"/>
        <dbReference type="Rhea" id="RHEA-COMP:9562"/>
        <dbReference type="ChEBI" id="CHEBI:15378"/>
        <dbReference type="ChEBI" id="CHEBI:17757"/>
        <dbReference type="ChEBI" id="CHEBI:57540"/>
        <dbReference type="ChEBI" id="CHEBI:57945"/>
        <dbReference type="ChEBI" id="CHEBI:62192"/>
    </reaction>
</comment>
<comment type="catalytic activity">
    <reaction evidence="1">
        <text>a plastoquinone + NADPH + (n+1) H(+)(in) = a plastoquinol + NADP(+) + n H(+)(out)</text>
        <dbReference type="Rhea" id="RHEA:42612"/>
        <dbReference type="Rhea" id="RHEA-COMP:9561"/>
        <dbReference type="Rhea" id="RHEA-COMP:9562"/>
        <dbReference type="ChEBI" id="CHEBI:15378"/>
        <dbReference type="ChEBI" id="CHEBI:17757"/>
        <dbReference type="ChEBI" id="CHEBI:57783"/>
        <dbReference type="ChEBI" id="CHEBI:58349"/>
        <dbReference type="ChEBI" id="CHEBI:62192"/>
    </reaction>
</comment>
<comment type="subunit">
    <text evidence="1">NDH-1 can be composed of about 15 different subunits; different subcomplexes with different compositions have been identified which probably have different functions.</text>
</comment>
<comment type="subcellular location">
    <subcellularLocation>
        <location evidence="1">Cellular thylakoid membrane</location>
        <topology evidence="1">Peripheral membrane protein</topology>
        <orientation evidence="1">Cytoplasmic side</orientation>
    </subcellularLocation>
</comment>
<comment type="similarity">
    <text evidence="1">Belongs to the complex I 49 kDa subunit family.</text>
</comment>
<reference key="1">
    <citation type="journal article" date="2007" name="ISME J.">
        <title>Population level functional diversity in a microbial community revealed by comparative genomic and metagenomic analyses.</title>
        <authorList>
            <person name="Bhaya D."/>
            <person name="Grossman A.R."/>
            <person name="Steunou A.-S."/>
            <person name="Khuri N."/>
            <person name="Cohan F.M."/>
            <person name="Hamamura N."/>
            <person name="Melendrez M.C."/>
            <person name="Bateson M.M."/>
            <person name="Ward D.M."/>
            <person name="Heidelberg J.F."/>
        </authorList>
    </citation>
    <scope>NUCLEOTIDE SEQUENCE [LARGE SCALE GENOMIC DNA]</scope>
    <source>
        <strain>JA-2-3B'a(2-13)</strain>
    </source>
</reference>
<keyword id="KW-0472">Membrane</keyword>
<keyword id="KW-0520">NAD</keyword>
<keyword id="KW-0521">NADP</keyword>
<keyword id="KW-0618">Plastoquinone</keyword>
<keyword id="KW-0874">Quinone</keyword>
<keyword id="KW-1185">Reference proteome</keyword>
<keyword id="KW-0793">Thylakoid</keyword>
<keyword id="KW-1278">Translocase</keyword>
<keyword id="KW-0813">Transport</keyword>
<protein>
    <recommendedName>
        <fullName evidence="1">NAD(P)H-quinone oxidoreductase subunit H</fullName>
        <ecNumber evidence="1">7.1.1.-</ecNumber>
    </recommendedName>
    <alternativeName>
        <fullName>NAD(P)H dehydrogenase subunit H</fullName>
    </alternativeName>
    <alternativeName>
        <fullName evidence="1">NADH-plastoquinone oxidoreductase subunit H</fullName>
    </alternativeName>
    <alternativeName>
        <fullName evidence="1">NDH-1 subunit H</fullName>
        <shortName evidence="1">NDH-H</shortName>
    </alternativeName>
</protein>
<sequence length="392" mass="44970">MIETRTDRMLLNFGPHHPSMHGVLRLLVTLDGENIVDCEPVIGYLHRGMEKIAENRTVVQYLPYVSRWDYGAGMFNEAITVNAVEKLAGISVPRRASYLRVIMLELTRITNHLLWFGPFLADLGAQTPFLYAMREREWILDLFEAVTGMRLINNNYFRVGGVAVDLPYGWTEKCLDFCEYFLPKVDEYERLVTDNPIFRRRLEGVGAISKQDAINWGLSGPMLRACGVNWDLRKVDHYECYDDFDWEVAVYPEGDCLARYRVRMKEMRESCKIVQQAVKALPGGPFENLEAKRMLEGPKSEWNKGDYQFISKKPSANFKIPKGEAYVRVESAKGELGIYIVGDDNVCPWRWKIRPPGFVNLQVLPQLIRGMKVADMIAILGSIDIIMGEVDR</sequence>
<gene>
    <name evidence="1" type="primary">ndhH</name>
    <name type="ordered locus">CYB_0872</name>
</gene>